<reference key="1">
    <citation type="journal article" date="2004" name="Nature">
        <title>Genome sequence of Silicibacter pomeroyi reveals adaptations to the marine environment.</title>
        <authorList>
            <person name="Moran M.A."/>
            <person name="Buchan A."/>
            <person name="Gonzalez J.M."/>
            <person name="Heidelberg J.F."/>
            <person name="Whitman W.B."/>
            <person name="Kiene R.P."/>
            <person name="Henriksen J.R."/>
            <person name="King G.M."/>
            <person name="Belas R."/>
            <person name="Fuqua C."/>
            <person name="Brinkac L.M."/>
            <person name="Lewis M."/>
            <person name="Johri S."/>
            <person name="Weaver B."/>
            <person name="Pai G."/>
            <person name="Eisen J.A."/>
            <person name="Rahe E."/>
            <person name="Sheldon W.M."/>
            <person name="Ye W."/>
            <person name="Miller T.R."/>
            <person name="Carlton J."/>
            <person name="Rasko D.A."/>
            <person name="Paulsen I.T."/>
            <person name="Ren Q."/>
            <person name="Daugherty S.C."/>
            <person name="DeBoy R.T."/>
            <person name="Dodson R.J."/>
            <person name="Durkin A.S."/>
            <person name="Madupu R."/>
            <person name="Nelson W.C."/>
            <person name="Sullivan S.A."/>
            <person name="Rosovitz M.J."/>
            <person name="Haft D.H."/>
            <person name="Selengut J."/>
            <person name="Ward N."/>
        </authorList>
    </citation>
    <scope>NUCLEOTIDE SEQUENCE [LARGE SCALE GENOMIC DNA]</scope>
    <source>
        <strain>ATCC 700808 / DSM 15171 / DSS-3</strain>
    </source>
</reference>
<reference key="2">
    <citation type="journal article" date="2014" name="Stand. Genomic Sci.">
        <title>An updated genome annotation for the model marine bacterium Ruegeria pomeroyi DSS-3.</title>
        <authorList>
            <person name="Rivers A.R."/>
            <person name="Smith C.B."/>
            <person name="Moran M.A."/>
        </authorList>
    </citation>
    <scope>GENOME REANNOTATION</scope>
    <source>
        <strain>ATCC 700808 / DSM 15171 / DSS-3</strain>
    </source>
</reference>
<reference key="3">
    <citation type="journal article" date="2011" name="Nature">
        <title>Novel pathway for assimilation of dimethylsulphoniopropionate widespread in marine bacteria.</title>
        <authorList>
            <person name="Reisch C.R."/>
            <person name="Stoudemayer M.J."/>
            <person name="Varaljay V.A."/>
            <person name="Amster I.J."/>
            <person name="Moran M.A."/>
            <person name="Whitman W.B."/>
        </authorList>
    </citation>
    <scope>FUNCTION</scope>
    <scope>DISRUPTION PHENOTYPE</scope>
    <scope>PATHWAY</scope>
    <source>
        <strain>ATCC 700808 / DSM 15171 / DSS-3</strain>
    </source>
</reference>
<reference key="4">
    <citation type="journal article" date="2014" name="J. Bacteriol.">
        <title>Regulatory and functional diversity of methylmercaptopropionate coenzyme A ligases from the dimethylsulfoniopropionate demethylation pathway in Ruegeria pomeroyi DSS-3 and other proteobacteria.</title>
        <authorList>
            <person name="Bullock H.A."/>
            <person name="Reisch C.R."/>
            <person name="Burns A.S."/>
            <person name="Moran M.A."/>
            <person name="Whitman W.B."/>
        </authorList>
    </citation>
    <scope>FUNCTION</scope>
    <scope>CATALYTIC ACTIVITY</scope>
    <scope>BIOPHYSICOCHEMICAL PROPERTIES</scope>
    <scope>ACTIVITY REGULATION</scope>
    <scope>SUBUNIT</scope>
    <scope>SUBSTRATE SPECIFICITY</scope>
</reference>
<keyword id="KW-0067">ATP-binding</keyword>
<keyword id="KW-0276">Fatty acid metabolism</keyword>
<keyword id="KW-0436">Ligase</keyword>
<keyword id="KW-0443">Lipid metabolism</keyword>
<keyword id="KW-0460">Magnesium</keyword>
<keyword id="KW-0479">Metal-binding</keyword>
<keyword id="KW-0547">Nucleotide-binding</keyword>
<keyword id="KW-1185">Reference proteome</keyword>
<organism>
    <name type="scientific">Ruegeria pomeroyi (strain ATCC 700808 / DSM 15171 / DSS-3)</name>
    <name type="common">Silicibacter pomeroyi</name>
    <dbReference type="NCBI Taxonomy" id="246200"/>
    <lineage>
        <taxon>Bacteria</taxon>
        <taxon>Pseudomonadati</taxon>
        <taxon>Pseudomonadota</taxon>
        <taxon>Alphaproteobacteria</taxon>
        <taxon>Rhodobacterales</taxon>
        <taxon>Roseobacteraceae</taxon>
        <taxon>Ruegeria</taxon>
    </lineage>
</organism>
<dbReference type="EC" id="6.2.1.44" evidence="4"/>
<dbReference type="EMBL" id="CP000031">
    <property type="protein sequence ID" value="AAV95316.1"/>
    <property type="molecule type" value="Genomic_DNA"/>
</dbReference>
<dbReference type="RefSeq" id="WP_011047771.1">
    <property type="nucleotide sequence ID" value="NC_003911.12"/>
</dbReference>
<dbReference type="SMR" id="Q5LRT0"/>
<dbReference type="STRING" id="246200.SPO2045"/>
<dbReference type="PaxDb" id="246200-SPO2045"/>
<dbReference type="KEGG" id="sil:SPO2045"/>
<dbReference type="eggNOG" id="COG0318">
    <property type="taxonomic scope" value="Bacteria"/>
</dbReference>
<dbReference type="HOGENOM" id="CLU_000022_59_5_5"/>
<dbReference type="OrthoDB" id="9803968at2"/>
<dbReference type="BioCyc" id="MetaCyc:MONOMER-16783"/>
<dbReference type="BRENDA" id="6.2.1.44">
    <property type="organism ID" value="8123"/>
</dbReference>
<dbReference type="UniPathway" id="UPA00199"/>
<dbReference type="Proteomes" id="UP000001023">
    <property type="component" value="Chromosome"/>
</dbReference>
<dbReference type="GO" id="GO:0016878">
    <property type="term" value="F:acid-thiol ligase activity"/>
    <property type="evidence" value="ECO:0000314"/>
    <property type="project" value="UniProtKB"/>
</dbReference>
<dbReference type="GO" id="GO:0005524">
    <property type="term" value="F:ATP binding"/>
    <property type="evidence" value="ECO:0007669"/>
    <property type="project" value="UniProtKB-KW"/>
</dbReference>
<dbReference type="GO" id="GO:0046872">
    <property type="term" value="F:metal ion binding"/>
    <property type="evidence" value="ECO:0007669"/>
    <property type="project" value="UniProtKB-KW"/>
</dbReference>
<dbReference type="GO" id="GO:0006631">
    <property type="term" value="P:fatty acid metabolic process"/>
    <property type="evidence" value="ECO:0007669"/>
    <property type="project" value="UniProtKB-UniPathway"/>
</dbReference>
<dbReference type="CDD" id="cd12119">
    <property type="entry name" value="ttLC_FACS_AlkK_like"/>
    <property type="match status" value="1"/>
</dbReference>
<dbReference type="FunFam" id="3.30.300.30:FF:000008">
    <property type="entry name" value="2,3-dihydroxybenzoate-AMP ligase"/>
    <property type="match status" value="1"/>
</dbReference>
<dbReference type="Gene3D" id="3.30.300.30">
    <property type="match status" value="1"/>
</dbReference>
<dbReference type="Gene3D" id="3.40.50.12780">
    <property type="entry name" value="N-terminal domain of ligase-like"/>
    <property type="match status" value="1"/>
</dbReference>
<dbReference type="InterPro" id="IPR025110">
    <property type="entry name" value="AMP-bd_C"/>
</dbReference>
<dbReference type="InterPro" id="IPR045851">
    <property type="entry name" value="AMP-bd_C_sf"/>
</dbReference>
<dbReference type="InterPro" id="IPR020845">
    <property type="entry name" value="AMP-binding_CS"/>
</dbReference>
<dbReference type="InterPro" id="IPR000873">
    <property type="entry name" value="AMP-dep_synth/lig_dom"/>
</dbReference>
<dbReference type="InterPro" id="IPR042099">
    <property type="entry name" value="ANL_N_sf"/>
</dbReference>
<dbReference type="NCBIfam" id="NF004837">
    <property type="entry name" value="PRK06187.1"/>
    <property type="match status" value="1"/>
</dbReference>
<dbReference type="PANTHER" id="PTHR43859">
    <property type="entry name" value="ACYL-ACTIVATING ENZYME"/>
    <property type="match status" value="1"/>
</dbReference>
<dbReference type="PANTHER" id="PTHR43859:SF4">
    <property type="entry name" value="BUTANOATE--COA LIGASE AAE1-RELATED"/>
    <property type="match status" value="1"/>
</dbReference>
<dbReference type="Pfam" id="PF00501">
    <property type="entry name" value="AMP-binding"/>
    <property type="match status" value="1"/>
</dbReference>
<dbReference type="Pfam" id="PF13193">
    <property type="entry name" value="AMP-binding_C"/>
    <property type="match status" value="1"/>
</dbReference>
<dbReference type="SUPFAM" id="SSF56801">
    <property type="entry name" value="Acetyl-CoA synthetase-like"/>
    <property type="match status" value="1"/>
</dbReference>
<dbReference type="PROSITE" id="PS00455">
    <property type="entry name" value="AMP_BINDING"/>
    <property type="match status" value="1"/>
</dbReference>
<accession>Q5LRT0</accession>
<name>DMDB_RUEPO</name>
<evidence type="ECO:0000250" key="1">
    <source>
        <dbReference type="UniProtKB" id="P0DX84"/>
    </source>
</evidence>
<evidence type="ECO:0000250" key="2">
    <source>
        <dbReference type="UniProtKB" id="Q5SKN9"/>
    </source>
</evidence>
<evidence type="ECO:0000269" key="3">
    <source>
    </source>
</evidence>
<evidence type="ECO:0000269" key="4">
    <source>
    </source>
</evidence>
<evidence type="ECO:0000303" key="5">
    <source>
    </source>
</evidence>
<evidence type="ECO:0000303" key="6">
    <source>
    </source>
</evidence>
<evidence type="ECO:0000305" key="7"/>
<proteinExistence type="evidence at protein level"/>
<protein>
    <recommendedName>
        <fullName evidence="5">3-methylmercaptopropionyl-CoA ligase</fullName>
        <shortName evidence="6">MMPA-CoA ligase</shortName>
        <ecNumber evidence="4">6.2.1.44</ecNumber>
    </recommendedName>
    <alternativeName>
        <fullName evidence="6">Acyl-CoA ligase</fullName>
    </alternativeName>
</protein>
<sequence length="539" mass="59066">MLGQMMYQPLLISSLIDHAARYHGEAQIWSVSTEGGVEETNWAGIADNARRLGSVLTDAGLAPQSRVATLAWNNRRHLEIYYGVSGAGFVLHTINPRLFPEQLVYILNHAEDRILFFDATFLPLVEGIRPHLTTVERLVLMGPRDEAAAARIEGLEFYDEFVATGDAGFDWPDLDERTASSLCYTSGTTGNPKGVLYSHRSTVLHSFGSNTRDCIGFSARDVVMPVVPMFHVNAWGTPYACAMSGSCMVLPGPDLHGEALVGLIDRYRVTIALGVPTIWQGLLATARAKGSTLESLTRTVIGGAACPPSMIAEFRDRYGVDTVHAWGMSEMSPLGTTNQPLAKHGALPIEAQHKLRENQGRPPYGVELKIVDDDGNTLPNDGQTQGDLMVRGHWVLDSYFQLQDQPILSDGWFATGDVATLDRDGYMTIRDRSKDIIKSGGEWISSVELENIAVAHPKLATAAVIGVPHPKWDERPLLVAVKAEGETPDEAELLAFFDGKIAKWQVPDRVVFVEALPLNATGKVLKRTLREQFRDVLTG</sequence>
<gene>
    <name evidence="5" type="primary">dmdB</name>
    <name type="ordered locus">SPO2045</name>
</gene>
<comment type="function">
    <text evidence="3 4">Involved in the assimilation of dimethylsulphoniopropionate (DMSP), an important compound in the fixation of carbon in marine phytoplankton. Catalyzes the ATP-dependent ligation of methylmercaptopropionate (MMPA) and CoA to yield methylmercaptopropionate-CoA (MMPA-CoA) (PubMed:21562561, PubMed:24443527). It is also active with short-chain-fatty-acid (carboxylic acids up to six carbons in length) (PubMed:21562561, PubMed:24443527).</text>
</comment>
<comment type="catalytic activity">
    <reaction evidence="4">
        <text>3-(methylsulfanyl)propanoate + ATP + CoA = 3-(methylsulfanyl)propanoyl-CoA + AMP + diphosphate</text>
        <dbReference type="Rhea" id="RHEA:43052"/>
        <dbReference type="ChEBI" id="CHEBI:30616"/>
        <dbReference type="ChEBI" id="CHEBI:33019"/>
        <dbReference type="ChEBI" id="CHEBI:49016"/>
        <dbReference type="ChEBI" id="CHEBI:57287"/>
        <dbReference type="ChEBI" id="CHEBI:82815"/>
        <dbReference type="ChEBI" id="CHEBI:456215"/>
        <dbReference type="EC" id="6.2.1.44"/>
    </reaction>
    <physiologicalReaction direction="left-to-right" evidence="4">
        <dbReference type="Rhea" id="RHEA:43053"/>
    </physiologicalReaction>
</comment>
<comment type="cofactor">
    <cofactor evidence="2">
        <name>Mg(2+)</name>
        <dbReference type="ChEBI" id="CHEBI:18420"/>
    </cofactor>
</comment>
<comment type="activity regulation">
    <text evidence="4">Activated by LiCl and NH(4)Cl. Inhibited by dimethylsulfoniopropionate (DMSP). MMPA concentrations above 2 mM relieve the DMSP inhibition and 80% of activity is regained at an MMPA concentration of 8 mM.</text>
</comment>
<comment type="biophysicochemical properties">
    <kinetics>
        <KM evidence="4">0.02 mM for CoA (with MMPA)</KM>
        <KM evidence="4">0.08 mM for CoA (with butyrate)</KM>
        <KM evidence="4">0.03 mM for ATP (with MMPA)</KM>
        <KM evidence="4">0.07 mM for MMPA</KM>
        <KM evidence="4">0.08 mM for ATP (with butyrate)</KM>
        <KM evidence="4">0.12 mM for butyrate</KM>
        <KM evidence="4">3.11 mM for propionate</KM>
        <KM evidence="4">5.25 mM for acrylate</KM>
        <Vmax evidence="4">15.4 umol/min/mg enzyme with MMPA as substrate</Vmax>
        <Vmax evidence="4">15.4 umol/min/mg enzyme with CoA as substrate (with MMPA)</Vmax>
        <Vmax evidence="4">7.6 umol/min/mg enzyme with ATP as substrate (with MMPA)</Vmax>
        <Vmax evidence="4">7.4 umol/min/mg enzyme with butyrate as substrate</Vmax>
        <Vmax evidence="4">3.8 umol/min/mg enzyme with propionate as substrate</Vmax>
        <Vmax evidence="4">3.8 umol/min/mg enzyme with ATP as substrate (with butyrate)</Vmax>
        <Vmax evidence="4">3.6 umol/min/mg enzyme with CoA as substrate (with butyrate)</Vmax>
        <Vmax evidence="4">1.0 umol/min/mg enzyme with acrylate as substrate</Vmax>
        <text evidence="4">kcat is 14.9 sec(-1) for ligase activity with MMPA as substrate. kcat is 7.2 sec(-1) for ligase activity with butyrate as substrate. kcat is 3.7 sec(-1) for ligase activity with propionate as substrate. kcat is 1 sec(-1) for ligase activity with acrylate as substrate.</text>
    </kinetics>
    <phDependence>
        <text evidence="4">Optimum pH is between 7.5.</text>
    </phDependence>
</comment>
<comment type="pathway">
    <text evidence="5">Lipid metabolism; fatty acid metabolism.</text>
</comment>
<comment type="subunit">
    <text evidence="4">Homodimer.</text>
</comment>
<comment type="disruption phenotype">
    <text evidence="3">Cells lacking this gene show a delayed growth on methylmercaptopropionate (MMPA).</text>
</comment>
<comment type="similarity">
    <text evidence="7">Belongs to the ATP-dependent AMP-binding enzyme family.</text>
</comment>
<feature type="chain" id="PRO_0000431553" description="3-methylmercaptopropionyl-CoA ligase">
    <location>
        <begin position="1"/>
        <end position="539"/>
    </location>
</feature>
<feature type="binding site" evidence="2">
    <location>
        <position position="185"/>
    </location>
    <ligand>
        <name>Mg(2+)</name>
        <dbReference type="ChEBI" id="CHEBI:18420"/>
    </ligand>
</feature>
<feature type="binding site" evidence="1">
    <location>
        <position position="231"/>
    </location>
    <ligand>
        <name>ATP</name>
        <dbReference type="ChEBI" id="CHEBI:30616"/>
    </ligand>
</feature>
<feature type="binding site" evidence="1">
    <location>
        <position position="303"/>
    </location>
    <ligand>
        <name>ATP</name>
        <dbReference type="ChEBI" id="CHEBI:30616"/>
    </ligand>
</feature>
<feature type="binding site" evidence="1">
    <location>
        <position position="324"/>
    </location>
    <ligand>
        <name>ATP</name>
        <dbReference type="ChEBI" id="CHEBI:30616"/>
    </ligand>
</feature>
<feature type="binding site" evidence="1">
    <location>
        <position position="325"/>
    </location>
    <ligand>
        <name>ATP</name>
        <dbReference type="ChEBI" id="CHEBI:30616"/>
    </ligand>
</feature>
<feature type="binding site" evidence="1">
    <location>
        <position position="329"/>
    </location>
    <ligand>
        <name>ATP</name>
        <dbReference type="ChEBI" id="CHEBI:30616"/>
    </ligand>
</feature>
<feature type="binding site" evidence="2">
    <location>
        <position position="330"/>
    </location>
    <ligand>
        <name>Mg(2+)</name>
        <dbReference type="ChEBI" id="CHEBI:18420"/>
    </ligand>
</feature>
<feature type="binding site" evidence="1">
    <location>
        <position position="359"/>
    </location>
    <ligand>
        <name>ATP</name>
        <dbReference type="ChEBI" id="CHEBI:30616"/>
    </ligand>
</feature>
<feature type="binding site" evidence="1">
    <location>
        <position position="417"/>
    </location>
    <ligand>
        <name>ATP</name>
        <dbReference type="ChEBI" id="CHEBI:30616"/>
    </ligand>
</feature>
<feature type="binding site" evidence="1">
    <location>
        <position position="432"/>
    </location>
    <ligand>
        <name>ATP</name>
        <dbReference type="ChEBI" id="CHEBI:30616"/>
    </ligand>
</feature>
<feature type="binding site" evidence="1">
    <location>
        <position position="523"/>
    </location>
    <ligand>
        <name>ATP</name>
        <dbReference type="ChEBI" id="CHEBI:30616"/>
    </ligand>
</feature>
<feature type="site" description="Plays an important role in catalysis" evidence="1">
    <location>
        <position position="523"/>
    </location>
</feature>